<evidence type="ECO:0000255" key="1"/>
<evidence type="ECO:0000269" key="2">
    <source>
    </source>
</evidence>
<evidence type="ECO:0000269" key="3">
    <source>
    </source>
</evidence>
<evidence type="ECO:0000269" key="4">
    <source>
    </source>
</evidence>
<evidence type="ECO:0000269" key="5">
    <source>
    </source>
</evidence>
<evidence type="ECO:0000269" key="6">
    <source>
    </source>
</evidence>
<evidence type="ECO:0000269" key="7">
    <source>
    </source>
</evidence>
<evidence type="ECO:0000303" key="8">
    <source>
    </source>
</evidence>
<evidence type="ECO:0000303" key="9">
    <source>
    </source>
</evidence>
<evidence type="ECO:0000303" key="10">
    <source>
    </source>
</evidence>
<evidence type="ECO:0000305" key="11"/>
<evidence type="ECO:0000312" key="12">
    <source>
        <dbReference type="EMBL" id="AAK93214.1"/>
    </source>
</evidence>
<evidence type="ECO:0000312" key="13">
    <source>
        <dbReference type="FlyBase" id="FBgn0037671"/>
    </source>
</evidence>
<evidence type="ECO:0000312" key="14">
    <source>
        <dbReference type="Proteomes" id="UP000000803"/>
    </source>
</evidence>
<proteinExistence type="evidence at protein level"/>
<organism evidence="14">
    <name type="scientific">Drosophila melanogaster</name>
    <name type="common">Fruit fly</name>
    <dbReference type="NCBI Taxonomy" id="7227"/>
    <lineage>
        <taxon>Eukaryota</taxon>
        <taxon>Metazoa</taxon>
        <taxon>Ecdysozoa</taxon>
        <taxon>Arthropoda</taxon>
        <taxon>Hexapoda</taxon>
        <taxon>Insecta</taxon>
        <taxon>Pterygota</taxon>
        <taxon>Neoptera</taxon>
        <taxon>Endopterygota</taxon>
        <taxon>Diptera</taxon>
        <taxon>Brachycera</taxon>
        <taxon>Muscomorpha</taxon>
        <taxon>Ephydroidea</taxon>
        <taxon>Drosophilidae</taxon>
        <taxon>Drosophila</taxon>
        <taxon>Sophophora</taxon>
    </lineage>
</organism>
<accession>Q9VHG4</accession>
<sequence>MLRVFVIFSLFIAAINASGEFTVLNRPKAISFKGNDALESHYVGDVLYASMGNAVSGDTNWNGLTINDPFNLAKGVILVHVQGIGHVTTAGNVKTYELTGSGTDASLNALAAELEAANEPVCDINFEQFDDGVQAWKSCFGDFEAPAAKPTKHLNPSLHTADKQFLQEVGFINSAADHLAEMAKPSNVLMLRVSVDGVAKAHGEKSVAVEEANKLLSAAISRLLAASQKSSDSVLFVQTTEKDVAASRAKRDTIAASTTNPYNLAVYYGSDYPVIFNIILWFMVVFGLSLLAICYAIAAMDPGRDSIIYRMTSTRIKKDN</sequence>
<name>RENR_DROME</name>
<dbReference type="EMBL" id="AE014297">
    <property type="protein sequence ID" value="AAF54350.1"/>
    <property type="molecule type" value="Genomic_DNA"/>
</dbReference>
<dbReference type="EMBL" id="AY051790">
    <property type="protein sequence ID" value="AAK93214.1"/>
    <property type="molecule type" value="mRNA"/>
</dbReference>
<dbReference type="RefSeq" id="NP_649876.1">
    <property type="nucleotide sequence ID" value="NM_141619.3"/>
</dbReference>
<dbReference type="SMR" id="Q9VHG4"/>
<dbReference type="FunCoup" id="Q9VHG4">
    <property type="interactions" value="670"/>
</dbReference>
<dbReference type="IntAct" id="Q9VHG4">
    <property type="interactions" value="6"/>
</dbReference>
<dbReference type="STRING" id="7227.FBpp0081458"/>
<dbReference type="PaxDb" id="7227-FBpp0081458"/>
<dbReference type="DNASU" id="41104"/>
<dbReference type="EnsemblMetazoa" id="FBtr0081978">
    <property type="protein sequence ID" value="FBpp0081458"/>
    <property type="gene ID" value="FBgn0037671"/>
</dbReference>
<dbReference type="GeneID" id="41104"/>
<dbReference type="KEGG" id="dme:Dmel_CG8444"/>
<dbReference type="UCSC" id="CG8444-RA">
    <property type="organism name" value="d. melanogaster"/>
</dbReference>
<dbReference type="AGR" id="FB:FBgn0037671"/>
<dbReference type="CTD" id="10159"/>
<dbReference type="FlyBase" id="FBgn0037671">
    <property type="gene designation" value="ATP6AP2"/>
</dbReference>
<dbReference type="VEuPathDB" id="VectorBase:FBgn0037671"/>
<dbReference type="eggNOG" id="KOG4737">
    <property type="taxonomic scope" value="Eukaryota"/>
</dbReference>
<dbReference type="GeneTree" id="ENSGT00390000008856"/>
<dbReference type="HOGENOM" id="CLU_065819_0_0_1"/>
<dbReference type="InParanoid" id="Q9VHG4"/>
<dbReference type="OMA" id="CDINFEQ"/>
<dbReference type="OrthoDB" id="7866065at2759"/>
<dbReference type="PhylomeDB" id="Q9VHG4"/>
<dbReference type="Reactome" id="R-DME-2022377">
    <property type="pathway name" value="Metabolism of Angiotensinogen to Angiotensins"/>
</dbReference>
<dbReference type="Reactome" id="R-DME-6798695">
    <property type="pathway name" value="Neutrophil degranulation"/>
</dbReference>
<dbReference type="SignaLink" id="Q9VHG4"/>
<dbReference type="BioGRID-ORCS" id="41104">
    <property type="hits" value="0 hits in 1 CRISPR screen"/>
</dbReference>
<dbReference type="GenomeRNAi" id="41104"/>
<dbReference type="PRO" id="PR:Q9VHG4"/>
<dbReference type="Proteomes" id="UP000000803">
    <property type="component" value="Chromosome 3R"/>
</dbReference>
<dbReference type="Bgee" id="FBgn0037671">
    <property type="expression patterns" value="Expressed in adult hindgut (Drosophila) and 290 other cell types or tissues"/>
</dbReference>
<dbReference type="GO" id="GO:0045177">
    <property type="term" value="C:apical part of cell"/>
    <property type="evidence" value="ECO:0000314"/>
    <property type="project" value="FlyBase"/>
</dbReference>
<dbReference type="GO" id="GO:0016324">
    <property type="term" value="C:apical plasma membrane"/>
    <property type="evidence" value="ECO:0007669"/>
    <property type="project" value="UniProtKB-SubCell"/>
</dbReference>
<dbReference type="GO" id="GO:0030424">
    <property type="term" value="C:axon"/>
    <property type="evidence" value="ECO:0007669"/>
    <property type="project" value="GOC"/>
</dbReference>
<dbReference type="GO" id="GO:0009986">
    <property type="term" value="C:cell surface"/>
    <property type="evidence" value="ECO:0000314"/>
    <property type="project" value="FlyBase"/>
</dbReference>
<dbReference type="GO" id="GO:0005789">
    <property type="term" value="C:endoplasmic reticulum membrane"/>
    <property type="evidence" value="ECO:0000314"/>
    <property type="project" value="UniProtKB"/>
</dbReference>
<dbReference type="GO" id="GO:0009897">
    <property type="term" value="C:external side of plasma membrane"/>
    <property type="evidence" value="ECO:0000318"/>
    <property type="project" value="GO_Central"/>
</dbReference>
<dbReference type="GO" id="GO:0005576">
    <property type="term" value="C:extracellular region"/>
    <property type="evidence" value="ECO:0007669"/>
    <property type="project" value="UniProtKB-SubCell"/>
</dbReference>
<dbReference type="GO" id="GO:0000139">
    <property type="term" value="C:Golgi membrane"/>
    <property type="evidence" value="ECO:0000314"/>
    <property type="project" value="UniProtKB"/>
</dbReference>
<dbReference type="GO" id="GO:0005886">
    <property type="term" value="C:plasma membrane"/>
    <property type="evidence" value="ECO:0000314"/>
    <property type="project" value="FlyBase"/>
</dbReference>
<dbReference type="GO" id="GO:0016471">
    <property type="term" value="C:vacuolar proton-transporting V-type ATPase complex"/>
    <property type="evidence" value="ECO:0000315"/>
    <property type="project" value="UniProtKB"/>
</dbReference>
<dbReference type="GO" id="GO:0031982">
    <property type="term" value="C:vesicle"/>
    <property type="evidence" value="ECO:0007669"/>
    <property type="project" value="UniProtKB-SubCell"/>
</dbReference>
<dbReference type="GO" id="GO:0005109">
    <property type="term" value="F:frizzled binding"/>
    <property type="evidence" value="ECO:0000314"/>
    <property type="project" value="FlyBase"/>
</dbReference>
<dbReference type="GO" id="GO:0038023">
    <property type="term" value="F:signaling receptor activity"/>
    <property type="evidence" value="ECO:0007669"/>
    <property type="project" value="InterPro"/>
</dbReference>
<dbReference type="GO" id="GO:0098930">
    <property type="term" value="P:axonal transport"/>
    <property type="evidence" value="ECO:0000315"/>
    <property type="project" value="FlyBase"/>
</dbReference>
<dbReference type="GO" id="GO:0048749">
    <property type="term" value="P:compound eye development"/>
    <property type="evidence" value="ECO:0000315"/>
    <property type="project" value="FlyBase"/>
</dbReference>
<dbReference type="GO" id="GO:0016197">
    <property type="term" value="P:endosomal transport"/>
    <property type="evidence" value="ECO:0000315"/>
    <property type="project" value="FlyBase"/>
</dbReference>
<dbReference type="GO" id="GO:0048104">
    <property type="term" value="P:establishment of body hair or bristle planar orientation"/>
    <property type="evidence" value="ECO:0000315"/>
    <property type="project" value="FlyBase"/>
</dbReference>
<dbReference type="GO" id="GO:0001737">
    <property type="term" value="P:establishment of imaginal disc-derived wing hair orientation"/>
    <property type="evidence" value="ECO:0000315"/>
    <property type="project" value="FlyBase"/>
</dbReference>
<dbReference type="GO" id="GO:0001736">
    <property type="term" value="P:establishment of planar polarity"/>
    <property type="evidence" value="ECO:0000315"/>
    <property type="project" value="UniProtKB"/>
</dbReference>
<dbReference type="GO" id="GO:0035317">
    <property type="term" value="P:imaginal disc-derived wing hair organization"/>
    <property type="evidence" value="ECO:0000315"/>
    <property type="project" value="FlyBase"/>
</dbReference>
<dbReference type="GO" id="GO:0007616">
    <property type="term" value="P:long-term memory"/>
    <property type="evidence" value="ECO:0000315"/>
    <property type="project" value="FlyBase"/>
</dbReference>
<dbReference type="GO" id="GO:0042331">
    <property type="term" value="P:phototaxis"/>
    <property type="evidence" value="ECO:0000315"/>
    <property type="project" value="FlyBase"/>
</dbReference>
<dbReference type="GO" id="GO:0030177">
    <property type="term" value="P:positive regulation of Wnt signaling pathway"/>
    <property type="evidence" value="ECO:0000318"/>
    <property type="project" value="GO_Central"/>
</dbReference>
<dbReference type="GO" id="GO:0090251">
    <property type="term" value="P:protein localization involved in establishment of planar polarity"/>
    <property type="evidence" value="ECO:0000315"/>
    <property type="project" value="FlyBase"/>
</dbReference>
<dbReference type="GO" id="GO:1902600">
    <property type="term" value="P:proton transmembrane transport"/>
    <property type="evidence" value="ECO:0000250"/>
    <property type="project" value="FlyBase"/>
</dbReference>
<dbReference type="GO" id="GO:0007614">
    <property type="term" value="P:short-term memory"/>
    <property type="evidence" value="ECO:0000315"/>
    <property type="project" value="FlyBase"/>
</dbReference>
<dbReference type="GO" id="GO:0050808">
    <property type="term" value="P:synapse organization"/>
    <property type="evidence" value="ECO:0000315"/>
    <property type="project" value="FlyBase"/>
</dbReference>
<dbReference type="GO" id="GO:0070072">
    <property type="term" value="P:vacuolar proton-transporting V-type ATPase complex assembly"/>
    <property type="evidence" value="ECO:0000316"/>
    <property type="project" value="UniProtKB"/>
</dbReference>
<dbReference type="InterPro" id="IPR056780">
    <property type="entry name" value="Renin_r_C"/>
</dbReference>
<dbReference type="InterPro" id="IPR012493">
    <property type="entry name" value="Renin_rcpt"/>
</dbReference>
<dbReference type="PANTHER" id="PTHR13351">
    <property type="entry name" value="RENIN RECEPTOR"/>
    <property type="match status" value="1"/>
</dbReference>
<dbReference type="PANTHER" id="PTHR13351:SF1">
    <property type="entry name" value="RENIN RECEPTOR"/>
    <property type="match status" value="1"/>
</dbReference>
<dbReference type="Pfam" id="PF07850">
    <property type="entry name" value="Renin_r"/>
    <property type="match status" value="1"/>
</dbReference>
<dbReference type="Pfam" id="PF25294">
    <property type="entry name" value="RENR_N"/>
    <property type="match status" value="1"/>
</dbReference>
<reference evidence="14" key="1">
    <citation type="journal article" date="2000" name="Science">
        <title>The genome sequence of Drosophila melanogaster.</title>
        <authorList>
            <person name="Adams M.D."/>
            <person name="Celniker S.E."/>
            <person name="Holt R.A."/>
            <person name="Evans C.A."/>
            <person name="Gocayne J.D."/>
            <person name="Amanatides P.G."/>
            <person name="Scherer S.E."/>
            <person name="Li P.W."/>
            <person name="Hoskins R.A."/>
            <person name="Galle R.F."/>
            <person name="George R.A."/>
            <person name="Lewis S.E."/>
            <person name="Richards S."/>
            <person name="Ashburner M."/>
            <person name="Henderson S.N."/>
            <person name="Sutton G.G."/>
            <person name="Wortman J.R."/>
            <person name="Yandell M.D."/>
            <person name="Zhang Q."/>
            <person name="Chen L.X."/>
            <person name="Brandon R.C."/>
            <person name="Rogers Y.-H.C."/>
            <person name="Blazej R.G."/>
            <person name="Champe M."/>
            <person name="Pfeiffer B.D."/>
            <person name="Wan K.H."/>
            <person name="Doyle C."/>
            <person name="Baxter E.G."/>
            <person name="Helt G."/>
            <person name="Nelson C.R."/>
            <person name="Miklos G.L.G."/>
            <person name="Abril J.F."/>
            <person name="Agbayani A."/>
            <person name="An H.-J."/>
            <person name="Andrews-Pfannkoch C."/>
            <person name="Baldwin D."/>
            <person name="Ballew R.M."/>
            <person name="Basu A."/>
            <person name="Baxendale J."/>
            <person name="Bayraktaroglu L."/>
            <person name="Beasley E.M."/>
            <person name="Beeson K.Y."/>
            <person name="Benos P.V."/>
            <person name="Berman B.P."/>
            <person name="Bhandari D."/>
            <person name="Bolshakov S."/>
            <person name="Borkova D."/>
            <person name="Botchan M.R."/>
            <person name="Bouck J."/>
            <person name="Brokstein P."/>
            <person name="Brottier P."/>
            <person name="Burtis K.C."/>
            <person name="Busam D.A."/>
            <person name="Butler H."/>
            <person name="Cadieu E."/>
            <person name="Center A."/>
            <person name="Chandra I."/>
            <person name="Cherry J.M."/>
            <person name="Cawley S."/>
            <person name="Dahlke C."/>
            <person name="Davenport L.B."/>
            <person name="Davies P."/>
            <person name="de Pablos B."/>
            <person name="Delcher A."/>
            <person name="Deng Z."/>
            <person name="Mays A.D."/>
            <person name="Dew I."/>
            <person name="Dietz S.M."/>
            <person name="Dodson K."/>
            <person name="Doup L.E."/>
            <person name="Downes M."/>
            <person name="Dugan-Rocha S."/>
            <person name="Dunkov B.C."/>
            <person name="Dunn P."/>
            <person name="Durbin K.J."/>
            <person name="Evangelista C.C."/>
            <person name="Ferraz C."/>
            <person name="Ferriera S."/>
            <person name="Fleischmann W."/>
            <person name="Fosler C."/>
            <person name="Gabrielian A.E."/>
            <person name="Garg N.S."/>
            <person name="Gelbart W.M."/>
            <person name="Glasser K."/>
            <person name="Glodek A."/>
            <person name="Gong F."/>
            <person name="Gorrell J.H."/>
            <person name="Gu Z."/>
            <person name="Guan P."/>
            <person name="Harris M."/>
            <person name="Harris N.L."/>
            <person name="Harvey D.A."/>
            <person name="Heiman T.J."/>
            <person name="Hernandez J.R."/>
            <person name="Houck J."/>
            <person name="Hostin D."/>
            <person name="Houston K.A."/>
            <person name="Howland T.J."/>
            <person name="Wei M.-H."/>
            <person name="Ibegwam C."/>
            <person name="Jalali M."/>
            <person name="Kalush F."/>
            <person name="Karpen G.H."/>
            <person name="Ke Z."/>
            <person name="Kennison J.A."/>
            <person name="Ketchum K.A."/>
            <person name="Kimmel B.E."/>
            <person name="Kodira C.D."/>
            <person name="Kraft C.L."/>
            <person name="Kravitz S."/>
            <person name="Kulp D."/>
            <person name="Lai Z."/>
            <person name="Lasko P."/>
            <person name="Lei Y."/>
            <person name="Levitsky A.A."/>
            <person name="Li J.H."/>
            <person name="Li Z."/>
            <person name="Liang Y."/>
            <person name="Lin X."/>
            <person name="Liu X."/>
            <person name="Mattei B."/>
            <person name="McIntosh T.C."/>
            <person name="McLeod M.P."/>
            <person name="McPherson D."/>
            <person name="Merkulov G."/>
            <person name="Milshina N.V."/>
            <person name="Mobarry C."/>
            <person name="Morris J."/>
            <person name="Moshrefi A."/>
            <person name="Mount S.M."/>
            <person name="Moy M."/>
            <person name="Murphy B."/>
            <person name="Murphy L."/>
            <person name="Muzny D.M."/>
            <person name="Nelson D.L."/>
            <person name="Nelson D.R."/>
            <person name="Nelson K.A."/>
            <person name="Nixon K."/>
            <person name="Nusskern D.R."/>
            <person name="Pacleb J.M."/>
            <person name="Palazzolo M."/>
            <person name="Pittman G.S."/>
            <person name="Pan S."/>
            <person name="Pollard J."/>
            <person name="Puri V."/>
            <person name="Reese M.G."/>
            <person name="Reinert K."/>
            <person name="Remington K."/>
            <person name="Saunders R.D.C."/>
            <person name="Scheeler F."/>
            <person name="Shen H."/>
            <person name="Shue B.C."/>
            <person name="Siden-Kiamos I."/>
            <person name="Simpson M."/>
            <person name="Skupski M.P."/>
            <person name="Smith T.J."/>
            <person name="Spier E."/>
            <person name="Spradling A.C."/>
            <person name="Stapleton M."/>
            <person name="Strong R."/>
            <person name="Sun E."/>
            <person name="Svirskas R."/>
            <person name="Tector C."/>
            <person name="Turner R."/>
            <person name="Venter E."/>
            <person name="Wang A.H."/>
            <person name="Wang X."/>
            <person name="Wang Z.-Y."/>
            <person name="Wassarman D.A."/>
            <person name="Weinstock G.M."/>
            <person name="Weissenbach J."/>
            <person name="Williams S.M."/>
            <person name="Woodage T."/>
            <person name="Worley K.C."/>
            <person name="Wu D."/>
            <person name="Yang S."/>
            <person name="Yao Q.A."/>
            <person name="Ye J."/>
            <person name="Yeh R.-F."/>
            <person name="Zaveri J.S."/>
            <person name="Zhan M."/>
            <person name="Zhang G."/>
            <person name="Zhao Q."/>
            <person name="Zheng L."/>
            <person name="Zheng X.H."/>
            <person name="Zhong F.N."/>
            <person name="Zhong W."/>
            <person name="Zhou X."/>
            <person name="Zhu S.C."/>
            <person name="Zhu X."/>
            <person name="Smith H.O."/>
            <person name="Gibbs R.A."/>
            <person name="Myers E.W."/>
            <person name="Rubin G.M."/>
            <person name="Venter J.C."/>
        </authorList>
    </citation>
    <scope>NUCLEOTIDE SEQUENCE [LARGE SCALE GENOMIC DNA]</scope>
    <source>
        <strain evidence="14">Berkeley</strain>
    </source>
</reference>
<reference evidence="14" key="2">
    <citation type="journal article" date="2002" name="Genome Biol.">
        <title>Annotation of the Drosophila melanogaster euchromatic genome: a systematic review.</title>
        <authorList>
            <person name="Misra S."/>
            <person name="Crosby M.A."/>
            <person name="Mungall C.J."/>
            <person name="Matthews B.B."/>
            <person name="Campbell K.S."/>
            <person name="Hradecky P."/>
            <person name="Huang Y."/>
            <person name="Kaminker J.S."/>
            <person name="Millburn G.H."/>
            <person name="Prochnik S.E."/>
            <person name="Smith C.D."/>
            <person name="Tupy J.L."/>
            <person name="Whitfield E.J."/>
            <person name="Bayraktaroglu L."/>
            <person name="Berman B.P."/>
            <person name="Bettencourt B.R."/>
            <person name="Celniker S.E."/>
            <person name="de Grey A.D.N.J."/>
            <person name="Drysdale R.A."/>
            <person name="Harris N.L."/>
            <person name="Richter J."/>
            <person name="Russo S."/>
            <person name="Schroeder A.J."/>
            <person name="Shu S.Q."/>
            <person name="Stapleton M."/>
            <person name="Yamada C."/>
            <person name="Ashburner M."/>
            <person name="Gelbart W.M."/>
            <person name="Rubin G.M."/>
            <person name="Lewis S.E."/>
        </authorList>
    </citation>
    <scope>GENOME REANNOTATION</scope>
    <source>
        <strain evidence="14">Berkeley</strain>
    </source>
</reference>
<reference evidence="12" key="3">
    <citation type="journal article" date="2002" name="Genome Biol.">
        <title>A Drosophila full-length cDNA resource.</title>
        <authorList>
            <person name="Stapleton M."/>
            <person name="Carlson J.W."/>
            <person name="Brokstein P."/>
            <person name="Yu C."/>
            <person name="Champe M."/>
            <person name="George R.A."/>
            <person name="Guarin H."/>
            <person name="Kronmiller B."/>
            <person name="Pacleb J.M."/>
            <person name="Park S."/>
            <person name="Wan K.H."/>
            <person name="Rubin G.M."/>
            <person name="Celniker S.E."/>
        </authorList>
    </citation>
    <scope>NUCLEOTIDE SEQUENCE [LARGE SCALE MRNA]</scope>
    <source>
        <strain evidence="12">Berkeley</strain>
        <tissue evidence="12">Embryo</tissue>
    </source>
</reference>
<reference evidence="11" key="4">
    <citation type="journal article" date="2010" name="Curr. Biol.">
        <title>Wnt/Frizzled signaling requires dPRR, the Drosophila homolog of the prorenin receptor.</title>
        <authorList>
            <person name="Buechling T."/>
            <person name="Bartscherer K."/>
            <person name="Ohkawara B."/>
            <person name="Chaudhary V."/>
            <person name="Spirohn K."/>
            <person name="Niehrs C."/>
            <person name="Boutros M."/>
        </authorList>
    </citation>
    <scope>FUNCTION</scope>
    <scope>INTERACTION WITH FZ AND FZ2</scope>
    <scope>SUBCELLULAR LOCATION</scope>
    <scope>DISRUPTION PHENOTYPE</scope>
</reference>
<reference evidence="11" key="5">
    <citation type="journal article" date="2010" name="Curr. Biol.">
        <title>Regulation of Frizzled-dependent planar polarity signaling by a V-ATPase subunit.</title>
        <authorList>
            <person name="Hermle T."/>
            <person name="Saltukoglu D."/>
            <person name="Gruenewald J."/>
            <person name="Walz G."/>
            <person name="Simons M."/>
        </authorList>
    </citation>
    <scope>FUNCTION</scope>
    <scope>DISRUPTION PHENOTYPE</scope>
</reference>
<reference evidence="11" key="6">
    <citation type="journal article" date="2013" name="EMBO J.">
        <title>Drosophila ATP6AP2/VhaPRR functions both as a novel planar cell polarity core protein and a regulator of endosomal trafficking.</title>
        <authorList>
            <person name="Hermle T."/>
            <person name="Guida M.C."/>
            <person name="Beck S."/>
            <person name="Helmstaedter S."/>
            <person name="Simons M."/>
        </authorList>
    </citation>
    <scope>FUNCTION</scope>
    <scope>INTERACTION WITH STAN</scope>
    <scope>SUBCELLULAR LOCATION</scope>
    <scope>DEVELOPMENTAL STAGE</scope>
    <scope>PROTEOLYTIC CLEAVAGE</scope>
    <scope>MUTAGENESIS OF ARG-248 AND ARG-251</scope>
</reference>
<reference evidence="11" key="7">
    <citation type="journal article" date="2015" name="Hum. Mol. Genet.">
        <title>Conditional depletion of intellectual disability and Parkinsonism candidate gene ATP6AP2 in fly and mouse induces cognitive impairment and neurodegeneration.</title>
        <authorList>
            <person name="Dubos A."/>
            <person name="Castells-Nobau A."/>
            <person name="Meziane H."/>
            <person name="Oortveld M.A."/>
            <person name="Houbaert X."/>
            <person name="Iacono G."/>
            <person name="Martin C."/>
            <person name="Mittelhaeuser C."/>
            <person name="Lalanne V."/>
            <person name="Kramer J.M."/>
            <person name="Bhukel A."/>
            <person name="Quentin C."/>
            <person name="Slabbert J."/>
            <person name="Verstreken P."/>
            <person name="Sigrist S.J."/>
            <person name="Messaddeq N."/>
            <person name="Birling M.C."/>
            <person name="Selloum M."/>
            <person name="Stunnenberg H.G."/>
            <person name="Humeau Y."/>
            <person name="Schenck A."/>
            <person name="Herault Y."/>
        </authorList>
    </citation>
    <scope>FUNCTION</scope>
    <scope>DISRUPTION PHENOTYPE</scope>
</reference>
<reference evidence="11" key="8">
    <citation type="journal article" date="2017" name="J. Exp. Med.">
        <title>Mutations in the X-linked ATP6AP2 cause a glycosylation disorder with autophagic defects.</title>
        <authorList>
            <person name="Rujano M.A."/>
            <person name="Cannata Serio M."/>
            <person name="Panasyuk G."/>
            <person name="Peanne R."/>
            <person name="Reunert J."/>
            <person name="Rymen D."/>
            <person name="Hauser V."/>
            <person name="Park J.H."/>
            <person name="Freisinger P."/>
            <person name="Souche E."/>
            <person name="Guida M.C."/>
            <person name="Maier E.M."/>
            <person name="Wada Y."/>
            <person name="Jaeger S."/>
            <person name="Krogan N.J."/>
            <person name="Kretz O."/>
            <person name="Nobre S."/>
            <person name="Garcia P."/>
            <person name="Quelhas D."/>
            <person name="Bird T.D."/>
            <person name="Raskind W.H."/>
            <person name="Schwake M."/>
            <person name="Duvet S."/>
            <person name="Foulquier F."/>
            <person name="Matthijs G."/>
            <person name="Marquardt T."/>
            <person name="Simons M."/>
        </authorList>
    </citation>
    <scope>FUNCTION</scope>
    <scope>DEVELOPMENTAL STAGE</scope>
    <scope>DISRUPTION PHENOTYPE</scope>
    <scope>MOTIF</scope>
    <scope>PROTEOLYTIC CLEAVAGE</scope>
    <scope>MUTAGENESIS OF LEU-98; 316-LYS--ASN-320; ARG-248 AND ARG-251</scope>
</reference>
<reference evidence="11" key="9">
    <citation type="journal article" date="2018" name="Mol. Biol. Cell">
        <title>ATP6AP2 functions as a V-ATPase assembly factor in the endoplasmic reticulum.</title>
        <authorList>
            <person name="Guida M.C."/>
            <person name="Hermle T."/>
            <person name="Graham L.A."/>
            <person name="Hauser V."/>
            <person name="Ryan M."/>
            <person name="Stevens T.H."/>
            <person name="Simons M."/>
        </authorList>
    </citation>
    <scope>FUNCTION</scope>
    <scope>INTERACTION WITH VHAAC45</scope>
    <scope>SUBCELLULAR LOCATION</scope>
    <scope>DISRUPTION PHENOTYPE</scope>
    <scope>MOTIF</scope>
    <scope>MUTAGENESIS OF 299-ALA--ASN-320 AND 317-LYS--ASN-320</scope>
</reference>
<keyword id="KW-1003">Cell membrane</keyword>
<keyword id="KW-0165">Cleavage on pair of basic residues</keyword>
<keyword id="KW-0256">Endoplasmic reticulum</keyword>
<keyword id="KW-0333">Golgi apparatus</keyword>
<keyword id="KW-0472">Membrane</keyword>
<keyword id="KW-0675">Receptor</keyword>
<keyword id="KW-1185">Reference proteome</keyword>
<keyword id="KW-0964">Secreted</keyword>
<keyword id="KW-0732">Signal</keyword>
<keyword id="KW-0812">Transmembrane</keyword>
<keyword id="KW-1133">Transmembrane helix</keyword>
<comment type="function">
    <text evidence="2 3 4 5 6 7">Multifunctional protein which functions as a transmembrane receptor in the planar cell polarity (PCP) and is involved in the assembly of the proton-transporting vacuolar (V)-ATPase protein pump (PubMed:20579879, PubMed:20579883, PubMed:29127204, PubMed:29995586). As transmembrane receptor mediates fz/PCP signaling through interaction with fz and stabilizes asymmetric PCP domains through its interaction with stan (PubMed:20579879, PubMed:20579883, PubMed:23292348, PubMed:29995586). Also mediates Wnt/beta-cat signaling through interaction with fz/fz2 (PubMed:20579879, PubMed:20579883). Probably by controlling the assembly of the V-ATPase pump and thus the acidification of the endo-lysosomal system, plays a role in many neuronal processes including synapse morphology and synaptic transmission (PubMed:26376863).</text>
</comment>
<comment type="function">
    <molecule>ATPase H(+)-transporting accessory protein 2 N-terminal fragment</molecule>
    <text evidence="4">Stabilizes asymmetric Planar Cell Polarity (PCP) domains through its interaction with stan.</text>
</comment>
<comment type="subunit">
    <text evidence="3 4 7">Interacts with fz and fz2 (PubMed:20579883). Interacts (via N-terminus) with stan (PubMed:23292348). As an accessory component of the multisubunit proton-transporting vacuolar (V)-ATPase protein pump, might interacts with VhaAC45 (PubMed:29995586).</text>
</comment>
<comment type="subcellular location">
    <molecule>ATPase H(+)-transporting accessory protein 2</molecule>
    <subcellularLocation>
        <location evidence="2 3">Cell membrane</location>
        <topology evidence="3">Single-pass type I membrane protein</topology>
    </subcellularLocation>
    <subcellularLocation>
        <location evidence="3 4 7">Endoplasmic reticulum membrane</location>
        <topology evidence="3">Single-pass type I membrane protein</topology>
    </subcellularLocation>
    <subcellularLocation>
        <location evidence="4">Vesicle</location>
    </subcellularLocation>
    <subcellularLocation>
        <location evidence="4">Apical cell membrane</location>
        <topology evidence="4">Single-pass type I membrane protein</topology>
    </subcellularLocation>
    <subcellularLocation>
        <location evidence="7">Golgi apparatus membrane</location>
        <topology evidence="7">Single-pass type I membrane protein</topology>
    </subcellularLocation>
    <text evidence="4">Co-localizes at the apical junctions with stan.</text>
</comment>
<comment type="subcellular location">
    <molecule>ATPase H(+)-transporting accessory protein 2 N-terminal fragment</molecule>
    <subcellularLocation>
        <location evidence="4">Secreted</location>
    </subcellularLocation>
    <text evidence="4">Localization to the planar cell polarity domains depends by stan.</text>
</comment>
<comment type="developmental stage">
    <text evidence="4 6">Expressed in whole larval extracts, fat body and larval brain (PubMed:29127204). At prepupal stages, expressed towards the wing margin; during the junctional remodeling phase relocalizes to intracellular compartments; before prehair formation, enriched at P-D membranes (at protein level) (PubMed:23292348).</text>
</comment>
<comment type="PTM">
    <text evidence="4 6">Proteolytically cleaved by a furin-like convertase in the trans-Golgi network to generate N- and C-terminal fragments (PubMed:23292348, PubMed:29127204). Cleavage is reduced in the fat body (PubMed:29127204).</text>
</comment>
<comment type="disruption phenotype">
    <text evidence="2 3 5 6 7">RNAi-mediated knockdown is lethal (PubMed:20579883). RNAi-mediated knockdown in the wings results in increased apoptosis, endoplasmic reticulum stress and lipid accumulation (PubMed:20579879, PubMed:20579883, PubMed:29127204, PubMed:29995586). This is accompanied by severe growth defects including venation defects, defective wing-hair polarity (as a result of defective fz and stan trafficking) and wg signaling (PubMed:20579879, PubMed:20579883, PubMed:29127204, PubMed:29995586). RNAi-mediated knockdown in the notum causes severe planar polarity defects affecting orientation morphology and number of sensory bristles or microchaetae (PubMed:20579879). RNAi-mediated knockdown in the eye results in defective phototaxis and presynaptic transmission in vacuolated photoreceptor neurons and pigment cells (PubMed:26376863). RNAi-mediated knockdown in neurons leads to defective autophagy and neurodegeneration, impaired synapse morphology, ultrastructural organization and axonal transport of the active zone component brp, ultimately resulting in lethality at different developmental stages (PubMed:26376863). The few adult survivors show strongly reduced spontaneous movements and poor climbing abilities (PubMed:26376863). RNAi-mediated knockdown in the mushroom body results in altered short- and long-term memory (PubMed:26376863). RNAi-mediated knockdown in the fat body results in increased autophagy (PubMed:29127204).</text>
</comment>
<feature type="signal peptide" evidence="1">
    <location>
        <begin position="1"/>
        <end position="17"/>
    </location>
</feature>
<feature type="chain" id="PRO_5015100291" description="ATPase H(+)-transporting accessory protein 2" evidence="1">
    <location>
        <begin position="18"/>
        <end position="320"/>
    </location>
</feature>
<feature type="chain" id="PRO_0000447860" description="ATPase H(+)-transporting accessory protein 2 N-terminal fragment" evidence="4">
    <location>
        <begin position="18"/>
        <end position="248"/>
    </location>
</feature>
<feature type="chain" id="PRO_0000447861" description="ATPase H(+)-transporting accessory protein 2 C-terminal fragment" evidence="4">
    <location>
        <begin position="252"/>
        <end position="320"/>
    </location>
</feature>
<feature type="topological domain" description="Lumenal" evidence="11">
    <location>
        <begin position="18"/>
        <end position="277"/>
    </location>
</feature>
<feature type="transmembrane region" description="Helical" evidence="1">
    <location>
        <begin position="278"/>
        <end position="298"/>
    </location>
</feature>
<feature type="topological domain" description="Cytoplasmic" evidence="11">
    <location>
        <begin position="299"/>
        <end position="320"/>
    </location>
</feature>
<feature type="short sequence motif" description="Mediates retrograde transport to the ER" evidence="6 7">
    <location>
        <begin position="317"/>
        <end position="320"/>
    </location>
</feature>
<feature type="site" description="Cleavage; by furin-like protease" evidence="4 6">
    <location>
        <begin position="248"/>
        <end position="249"/>
    </location>
</feature>
<feature type="site" description="Cleavage; by furin-like protease" evidence="4 6">
    <location>
        <begin position="251"/>
        <end position="252"/>
    </location>
</feature>
<feature type="mutagenesis site" description="Reduces protein stability and increases N-glycosylation levels of proteins which targets the misfolded protein to degradation. Impairs autophagy and mTOR signaling. Reduces eclosion rate with few adult escapers showing poor mobility, decreased or absent climbing capabilities, blistered winds and reduced size and death within 3-4 days. In the brain, results in neural development defects in the optic lobe. In the fat body, increases lipid droplets size and total triglycerides." evidence="6">
    <original>L</original>
    <variation>S</variation>
    <location>
        <position position="98"/>
    </location>
</feature>
<feature type="mutagenesis site" description="Prevents cleavage; when associated with A-251." evidence="4 6">
    <original>R</original>
    <variation>A</variation>
    <location>
        <position position="248"/>
    </location>
</feature>
<feature type="mutagenesis site" description="Prevents cleavage; when associated with A-248." evidence="4 6">
    <original>R</original>
    <variation>A</variation>
    <location>
        <position position="251"/>
    </location>
</feature>
<feature type="mutagenesis site" description="Lethal in the late larval stage with few adult escapers showing poor mobility, decreased or absent climbing capabilities, blistered wings, reduced head size and death within 3-4 days after eclosion. Impairs localization to the endoplasmic reticulum, enhances cleavage and protein stability." evidence="6 7">
    <location>
        <begin position="299"/>
        <end position="320"/>
    </location>
</feature>
<feature type="mutagenesis site" description="Survive till late pupal stage. Impairs localization to the endoplasmic reticulum and autophagy degradation. In the fat body, increases lipid droplets size and total triglycerides." evidence="6 7">
    <location>
        <begin position="317"/>
        <end position="320"/>
    </location>
</feature>
<gene>
    <name evidence="10 13" type="primary">ATP6AP2</name>
    <name evidence="13" type="synonym">VhaM8-9</name>
    <name evidence="13" type="synonym">VhaM8.9</name>
    <name evidence="8 13" type="synonym">VhaPRR</name>
    <name evidence="13" type="ORF">CG8444</name>
</gene>
<protein>
    <recommendedName>
        <fullName evidence="10 13">ATPase H(+)-transporting accessory protein 2</fullName>
    </recommendedName>
    <alternativeName>
        <fullName evidence="11">Renin homolog receptor</fullName>
        <shortName evidence="8 13">dPRR</shortName>
    </alternativeName>
    <component>
        <recommendedName>
            <fullName evidence="9">ATPase H(+)-transporting accessory protein 2 N-terminal fragment</fullName>
        </recommendedName>
    </component>
    <component>
        <recommendedName>
            <fullName evidence="9">ATPase H(+)-transporting accessory protein 2 C-terminal fragment</fullName>
        </recommendedName>
    </component>
</protein>